<evidence type="ECO:0000255" key="1">
    <source>
        <dbReference type="HAMAP-Rule" id="MF_00577"/>
    </source>
</evidence>
<protein>
    <recommendedName>
        <fullName evidence="1">Urocanate hydratase</fullName>
        <shortName evidence="1">Urocanase</shortName>
        <ecNumber evidence="1">4.2.1.49</ecNumber>
    </recommendedName>
    <alternativeName>
        <fullName evidence="1">Imidazolonepropionate hydrolase</fullName>
    </alternativeName>
</protein>
<feature type="chain" id="PRO_1000199897" description="Urocanate hydratase">
    <location>
        <begin position="1"/>
        <end position="552"/>
    </location>
</feature>
<feature type="active site" evidence="1">
    <location>
        <position position="407"/>
    </location>
</feature>
<feature type="binding site" evidence="1">
    <location>
        <begin position="49"/>
        <end position="50"/>
    </location>
    <ligand>
        <name>NAD(+)</name>
        <dbReference type="ChEBI" id="CHEBI:57540"/>
    </ligand>
</feature>
<feature type="binding site" evidence="1">
    <location>
        <position position="127"/>
    </location>
    <ligand>
        <name>NAD(+)</name>
        <dbReference type="ChEBI" id="CHEBI:57540"/>
    </ligand>
</feature>
<feature type="binding site" evidence="1">
    <location>
        <begin position="173"/>
        <end position="175"/>
    </location>
    <ligand>
        <name>NAD(+)</name>
        <dbReference type="ChEBI" id="CHEBI:57540"/>
    </ligand>
</feature>
<feature type="binding site" evidence="1">
    <location>
        <position position="193"/>
    </location>
    <ligand>
        <name>NAD(+)</name>
        <dbReference type="ChEBI" id="CHEBI:57540"/>
    </ligand>
</feature>
<feature type="binding site" evidence="1">
    <location>
        <begin position="239"/>
        <end position="240"/>
    </location>
    <ligand>
        <name>NAD(+)</name>
        <dbReference type="ChEBI" id="CHEBI:57540"/>
    </ligand>
</feature>
<feature type="binding site" evidence="1">
    <location>
        <begin position="260"/>
        <end position="264"/>
    </location>
    <ligand>
        <name>NAD(+)</name>
        <dbReference type="ChEBI" id="CHEBI:57540"/>
    </ligand>
</feature>
<feature type="binding site" evidence="1">
    <location>
        <begin position="270"/>
        <end position="271"/>
    </location>
    <ligand>
        <name>NAD(+)</name>
        <dbReference type="ChEBI" id="CHEBI:57540"/>
    </ligand>
</feature>
<feature type="binding site" evidence="1">
    <location>
        <position position="319"/>
    </location>
    <ligand>
        <name>NAD(+)</name>
        <dbReference type="ChEBI" id="CHEBI:57540"/>
    </ligand>
</feature>
<feature type="binding site" evidence="1">
    <location>
        <position position="489"/>
    </location>
    <ligand>
        <name>NAD(+)</name>
        <dbReference type="ChEBI" id="CHEBI:57540"/>
    </ligand>
</feature>
<organism>
    <name type="scientific">Bacillus cereus (strain Q1)</name>
    <dbReference type="NCBI Taxonomy" id="361100"/>
    <lineage>
        <taxon>Bacteria</taxon>
        <taxon>Bacillati</taxon>
        <taxon>Bacillota</taxon>
        <taxon>Bacilli</taxon>
        <taxon>Bacillales</taxon>
        <taxon>Bacillaceae</taxon>
        <taxon>Bacillus</taxon>
        <taxon>Bacillus cereus group</taxon>
    </lineage>
</organism>
<dbReference type="EC" id="4.2.1.49" evidence="1"/>
<dbReference type="EMBL" id="CP000227">
    <property type="protein sequence ID" value="ACM13879.1"/>
    <property type="molecule type" value="Genomic_DNA"/>
</dbReference>
<dbReference type="SMR" id="B9IUG9"/>
<dbReference type="KEGG" id="bcq:BCQ_3451"/>
<dbReference type="HOGENOM" id="CLU_018868_0_1_9"/>
<dbReference type="UniPathway" id="UPA00379">
    <property type="reaction ID" value="UER00550"/>
</dbReference>
<dbReference type="Proteomes" id="UP000000441">
    <property type="component" value="Chromosome"/>
</dbReference>
<dbReference type="GO" id="GO:0005737">
    <property type="term" value="C:cytoplasm"/>
    <property type="evidence" value="ECO:0007669"/>
    <property type="project" value="UniProtKB-SubCell"/>
</dbReference>
<dbReference type="GO" id="GO:0016153">
    <property type="term" value="F:urocanate hydratase activity"/>
    <property type="evidence" value="ECO:0007669"/>
    <property type="project" value="UniProtKB-UniRule"/>
</dbReference>
<dbReference type="GO" id="GO:0019556">
    <property type="term" value="P:L-histidine catabolic process to glutamate and formamide"/>
    <property type="evidence" value="ECO:0007669"/>
    <property type="project" value="UniProtKB-UniPathway"/>
</dbReference>
<dbReference type="GO" id="GO:0019557">
    <property type="term" value="P:L-histidine catabolic process to glutamate and formate"/>
    <property type="evidence" value="ECO:0007669"/>
    <property type="project" value="UniProtKB-UniPathway"/>
</dbReference>
<dbReference type="FunFam" id="3.40.50.10730:FF:000001">
    <property type="entry name" value="Urocanate hydratase"/>
    <property type="match status" value="1"/>
</dbReference>
<dbReference type="Gene3D" id="3.40.50.10730">
    <property type="entry name" value="Urocanase like domains"/>
    <property type="match status" value="1"/>
</dbReference>
<dbReference type="Gene3D" id="3.40.1770.10">
    <property type="entry name" value="Urocanase superfamily"/>
    <property type="match status" value="1"/>
</dbReference>
<dbReference type="HAMAP" id="MF_00577">
    <property type="entry name" value="HutU"/>
    <property type="match status" value="1"/>
</dbReference>
<dbReference type="InterPro" id="IPR055351">
    <property type="entry name" value="Urocanase"/>
</dbReference>
<dbReference type="InterPro" id="IPR023637">
    <property type="entry name" value="Urocanase-like"/>
</dbReference>
<dbReference type="InterPro" id="IPR035401">
    <property type="entry name" value="Urocanase_C"/>
</dbReference>
<dbReference type="InterPro" id="IPR038364">
    <property type="entry name" value="Urocanase_central_sf"/>
</dbReference>
<dbReference type="InterPro" id="IPR023636">
    <property type="entry name" value="Urocanase_CS"/>
</dbReference>
<dbReference type="InterPro" id="IPR035400">
    <property type="entry name" value="Urocanase_N"/>
</dbReference>
<dbReference type="InterPro" id="IPR035085">
    <property type="entry name" value="Urocanase_Rossmann-like"/>
</dbReference>
<dbReference type="InterPro" id="IPR036190">
    <property type="entry name" value="Urocanase_sf"/>
</dbReference>
<dbReference type="NCBIfam" id="TIGR01228">
    <property type="entry name" value="hutU"/>
    <property type="match status" value="1"/>
</dbReference>
<dbReference type="NCBIfam" id="NF003820">
    <property type="entry name" value="PRK05414.1"/>
    <property type="match status" value="1"/>
</dbReference>
<dbReference type="PANTHER" id="PTHR12216">
    <property type="entry name" value="UROCANATE HYDRATASE"/>
    <property type="match status" value="1"/>
</dbReference>
<dbReference type="PANTHER" id="PTHR12216:SF4">
    <property type="entry name" value="UROCANATE HYDRATASE"/>
    <property type="match status" value="1"/>
</dbReference>
<dbReference type="Pfam" id="PF01175">
    <property type="entry name" value="Urocanase"/>
    <property type="match status" value="1"/>
</dbReference>
<dbReference type="Pfam" id="PF17392">
    <property type="entry name" value="Urocanase_C"/>
    <property type="match status" value="1"/>
</dbReference>
<dbReference type="Pfam" id="PF17391">
    <property type="entry name" value="Urocanase_N"/>
    <property type="match status" value="1"/>
</dbReference>
<dbReference type="PIRSF" id="PIRSF001423">
    <property type="entry name" value="Urocanate_hydrat"/>
    <property type="match status" value="1"/>
</dbReference>
<dbReference type="SUPFAM" id="SSF111326">
    <property type="entry name" value="Urocanase"/>
    <property type="match status" value="1"/>
</dbReference>
<dbReference type="PROSITE" id="PS01233">
    <property type="entry name" value="UROCANASE"/>
    <property type="match status" value="1"/>
</dbReference>
<reference key="1">
    <citation type="journal article" date="2009" name="J. Bacteriol.">
        <title>Complete genome sequence of the extremophilic Bacillus cereus strain Q1 with industrial applications.</title>
        <authorList>
            <person name="Xiong Z."/>
            <person name="Jiang Y."/>
            <person name="Qi D."/>
            <person name="Lu H."/>
            <person name="Yang F."/>
            <person name="Yang J."/>
            <person name="Chen L."/>
            <person name="Sun L."/>
            <person name="Xu X."/>
            <person name="Xue Y."/>
            <person name="Zhu Y."/>
            <person name="Jin Q."/>
        </authorList>
    </citation>
    <scope>NUCLEOTIDE SEQUENCE [LARGE SCALE GENOMIC DNA]</scope>
    <source>
        <strain>Q1</strain>
    </source>
</reference>
<proteinExistence type="inferred from homology"/>
<comment type="function">
    <text evidence="1">Catalyzes the conversion of urocanate to 4-imidazolone-5-propionate.</text>
</comment>
<comment type="catalytic activity">
    <reaction evidence="1">
        <text>4-imidazolone-5-propanoate = trans-urocanate + H2O</text>
        <dbReference type="Rhea" id="RHEA:13101"/>
        <dbReference type="ChEBI" id="CHEBI:15377"/>
        <dbReference type="ChEBI" id="CHEBI:17771"/>
        <dbReference type="ChEBI" id="CHEBI:77893"/>
        <dbReference type="EC" id="4.2.1.49"/>
    </reaction>
</comment>
<comment type="cofactor">
    <cofactor evidence="1">
        <name>NAD(+)</name>
        <dbReference type="ChEBI" id="CHEBI:57540"/>
    </cofactor>
    <text evidence="1">Binds 1 NAD(+) per subunit.</text>
</comment>
<comment type="pathway">
    <text evidence="1">Amino-acid degradation; L-histidine degradation into L-glutamate; N-formimidoyl-L-glutamate from L-histidine: step 2/3.</text>
</comment>
<comment type="subcellular location">
    <subcellularLocation>
        <location evidence="1">Cytoplasm</location>
    </subcellularLocation>
</comment>
<comment type="similarity">
    <text evidence="1">Belongs to the urocanase family.</text>
</comment>
<name>HUTU_BACCQ</name>
<gene>
    <name evidence="1" type="primary">hutU</name>
    <name type="ordered locus">BCQ_3451</name>
</gene>
<accession>B9IUG9</accession>
<keyword id="KW-0963">Cytoplasm</keyword>
<keyword id="KW-0369">Histidine metabolism</keyword>
<keyword id="KW-0456">Lyase</keyword>
<keyword id="KW-0520">NAD</keyword>
<sequence length="552" mass="60750">MEKVKQTIRAPRGTELQTKGWVQEAALRMLMNNLDPEVAEKPEELVVYGGIGRAARNWESYNAIVDSLKTLESDETLLVQSGKPVAIFKSHEDAPRVLLANSNLVPKWANWDHFRELEKKGLMMYGQMTAGSWIYIGTQGILQGTYETFGEAARQHFGGSLKGTLTLTAGLGGMGGAQPLAVTMNGGVVIAIDVDKRSIDRRIEKRYCDMYTESLEEALTVANEYKEKKEPISIGLLGNAAEILPELVKRNITPDLVTDQTSAHDPLNGYIPVGYTLEEAAKLREEDPERYVQLSKESMTKHVEAMLTMQAKGAITFDYGNNIRQVAFDEGLKNAFDFPGFVPAFIRPLFCEGKGPFRWVALSGDPEDIYKTDEVILREFADNEHLCNWIRMARQQVEFQGLPSRICWLGYGERAKFGRIINEMVANGELSAPIVIGRDHLDCGSVASPNRETEAMKDGSDAVADWPILNALINSVNGASWVSVHHGGGVGMGYSLHAGMVIVADGTEAAAKRIERVLTSDPGMGVVRHVDAGYDLAVETAKEKGVNIPMMK</sequence>